<reference key="1">
    <citation type="submission" date="2003-04" db="EMBL/GenBank/DDBJ databases">
        <title>Homo sapiens mRNA similar to zinc finger protein 85.</title>
        <authorList>
            <person name="Bi A."/>
            <person name="Yu L."/>
        </authorList>
    </citation>
    <scope>NUCLEOTIDE SEQUENCE [MRNA]</scope>
</reference>
<reference key="2">
    <citation type="journal article" date="2004" name="Nature">
        <title>The DNA sequence and biology of human chromosome 19.</title>
        <authorList>
            <person name="Grimwood J."/>
            <person name="Gordon L.A."/>
            <person name="Olsen A.S."/>
            <person name="Terry A."/>
            <person name="Schmutz J."/>
            <person name="Lamerdin J.E."/>
            <person name="Hellsten U."/>
            <person name="Goodstein D."/>
            <person name="Couronne O."/>
            <person name="Tran-Gyamfi M."/>
            <person name="Aerts A."/>
            <person name="Altherr M."/>
            <person name="Ashworth L."/>
            <person name="Bajorek E."/>
            <person name="Black S."/>
            <person name="Branscomb E."/>
            <person name="Caenepeel S."/>
            <person name="Carrano A.V."/>
            <person name="Caoile C."/>
            <person name="Chan Y.M."/>
            <person name="Christensen M."/>
            <person name="Cleland C.A."/>
            <person name="Copeland A."/>
            <person name="Dalin E."/>
            <person name="Dehal P."/>
            <person name="Denys M."/>
            <person name="Detter J.C."/>
            <person name="Escobar J."/>
            <person name="Flowers D."/>
            <person name="Fotopulos D."/>
            <person name="Garcia C."/>
            <person name="Georgescu A.M."/>
            <person name="Glavina T."/>
            <person name="Gomez M."/>
            <person name="Gonzales E."/>
            <person name="Groza M."/>
            <person name="Hammon N."/>
            <person name="Hawkins T."/>
            <person name="Haydu L."/>
            <person name="Ho I."/>
            <person name="Huang W."/>
            <person name="Israni S."/>
            <person name="Jett J."/>
            <person name="Kadner K."/>
            <person name="Kimball H."/>
            <person name="Kobayashi A."/>
            <person name="Larionov V."/>
            <person name="Leem S.-H."/>
            <person name="Lopez F."/>
            <person name="Lou Y."/>
            <person name="Lowry S."/>
            <person name="Malfatti S."/>
            <person name="Martinez D."/>
            <person name="McCready P.M."/>
            <person name="Medina C."/>
            <person name="Morgan J."/>
            <person name="Nelson K."/>
            <person name="Nolan M."/>
            <person name="Ovcharenko I."/>
            <person name="Pitluck S."/>
            <person name="Pollard M."/>
            <person name="Popkie A.P."/>
            <person name="Predki P."/>
            <person name="Quan G."/>
            <person name="Ramirez L."/>
            <person name="Rash S."/>
            <person name="Retterer J."/>
            <person name="Rodriguez A."/>
            <person name="Rogers S."/>
            <person name="Salamov A."/>
            <person name="Salazar A."/>
            <person name="She X."/>
            <person name="Smith D."/>
            <person name="Slezak T."/>
            <person name="Solovyev V."/>
            <person name="Thayer N."/>
            <person name="Tice H."/>
            <person name="Tsai M."/>
            <person name="Ustaszewska A."/>
            <person name="Vo N."/>
            <person name="Wagner M."/>
            <person name="Wheeler J."/>
            <person name="Wu K."/>
            <person name="Xie G."/>
            <person name="Yang J."/>
            <person name="Dubchak I."/>
            <person name="Furey T.S."/>
            <person name="DeJong P."/>
            <person name="Dickson M."/>
            <person name="Gordon D."/>
            <person name="Eichler E.E."/>
            <person name="Pennacchio L.A."/>
            <person name="Richardson P."/>
            <person name="Stubbs L."/>
            <person name="Rokhsar D.S."/>
            <person name="Myers R.M."/>
            <person name="Rubin E.M."/>
            <person name="Lucas S.M."/>
        </authorList>
    </citation>
    <scope>NUCLEOTIDE SEQUENCE [LARGE SCALE GENOMIC DNA]</scope>
</reference>
<reference key="3">
    <citation type="journal article" date="2004" name="Nat. Genet.">
        <title>Complete sequencing and characterization of 21,243 full-length human cDNAs.</title>
        <authorList>
            <person name="Ota T."/>
            <person name="Suzuki Y."/>
            <person name="Nishikawa T."/>
            <person name="Otsuki T."/>
            <person name="Sugiyama T."/>
            <person name="Irie R."/>
            <person name="Wakamatsu A."/>
            <person name="Hayashi K."/>
            <person name="Sato H."/>
            <person name="Nagai K."/>
            <person name="Kimura K."/>
            <person name="Makita H."/>
            <person name="Sekine M."/>
            <person name="Obayashi M."/>
            <person name="Nishi T."/>
            <person name="Shibahara T."/>
            <person name="Tanaka T."/>
            <person name="Ishii S."/>
            <person name="Yamamoto J."/>
            <person name="Saito K."/>
            <person name="Kawai Y."/>
            <person name="Isono Y."/>
            <person name="Nakamura Y."/>
            <person name="Nagahari K."/>
            <person name="Murakami K."/>
            <person name="Yasuda T."/>
            <person name="Iwayanagi T."/>
            <person name="Wagatsuma M."/>
            <person name="Shiratori A."/>
            <person name="Sudo H."/>
            <person name="Hosoiri T."/>
            <person name="Kaku Y."/>
            <person name="Kodaira H."/>
            <person name="Kondo H."/>
            <person name="Sugawara M."/>
            <person name="Takahashi M."/>
            <person name="Kanda K."/>
            <person name="Yokoi T."/>
            <person name="Furuya T."/>
            <person name="Kikkawa E."/>
            <person name="Omura Y."/>
            <person name="Abe K."/>
            <person name="Kamihara K."/>
            <person name="Katsuta N."/>
            <person name="Sato K."/>
            <person name="Tanikawa M."/>
            <person name="Yamazaki M."/>
            <person name="Ninomiya K."/>
            <person name="Ishibashi T."/>
            <person name="Yamashita H."/>
            <person name="Murakawa K."/>
            <person name="Fujimori K."/>
            <person name="Tanai H."/>
            <person name="Kimata M."/>
            <person name="Watanabe M."/>
            <person name="Hiraoka S."/>
            <person name="Chiba Y."/>
            <person name="Ishida S."/>
            <person name="Ono Y."/>
            <person name="Takiguchi S."/>
            <person name="Watanabe S."/>
            <person name="Yosida M."/>
            <person name="Hotuta T."/>
            <person name="Kusano J."/>
            <person name="Kanehori K."/>
            <person name="Takahashi-Fujii A."/>
            <person name="Hara H."/>
            <person name="Tanase T.-O."/>
            <person name="Nomura Y."/>
            <person name="Togiya S."/>
            <person name="Komai F."/>
            <person name="Hara R."/>
            <person name="Takeuchi K."/>
            <person name="Arita M."/>
            <person name="Imose N."/>
            <person name="Musashino K."/>
            <person name="Yuuki H."/>
            <person name="Oshima A."/>
            <person name="Sasaki N."/>
            <person name="Aotsuka S."/>
            <person name="Yoshikawa Y."/>
            <person name="Matsunawa H."/>
            <person name="Ichihara T."/>
            <person name="Shiohata N."/>
            <person name="Sano S."/>
            <person name="Moriya S."/>
            <person name="Momiyama H."/>
            <person name="Satoh N."/>
            <person name="Takami S."/>
            <person name="Terashima Y."/>
            <person name="Suzuki O."/>
            <person name="Nakagawa S."/>
            <person name="Senoh A."/>
            <person name="Mizoguchi H."/>
            <person name="Goto Y."/>
            <person name="Shimizu F."/>
            <person name="Wakebe H."/>
            <person name="Hishigaki H."/>
            <person name="Watanabe T."/>
            <person name="Sugiyama A."/>
            <person name="Takemoto M."/>
            <person name="Kawakami B."/>
            <person name="Yamazaki M."/>
            <person name="Watanabe K."/>
            <person name="Kumagai A."/>
            <person name="Itakura S."/>
            <person name="Fukuzumi Y."/>
            <person name="Fujimori Y."/>
            <person name="Komiyama M."/>
            <person name="Tashiro H."/>
            <person name="Tanigami A."/>
            <person name="Fujiwara T."/>
            <person name="Ono T."/>
            <person name="Yamada K."/>
            <person name="Fujii Y."/>
            <person name="Ozaki K."/>
            <person name="Hirao M."/>
            <person name="Ohmori Y."/>
            <person name="Kawabata A."/>
            <person name="Hikiji T."/>
            <person name="Kobatake N."/>
            <person name="Inagaki H."/>
            <person name="Ikema Y."/>
            <person name="Okamoto S."/>
            <person name="Okitani R."/>
            <person name="Kawakami T."/>
            <person name="Noguchi S."/>
            <person name="Itoh T."/>
            <person name="Shigeta K."/>
            <person name="Senba T."/>
            <person name="Matsumura K."/>
            <person name="Nakajima Y."/>
            <person name="Mizuno T."/>
            <person name="Morinaga M."/>
            <person name="Sasaki M."/>
            <person name="Togashi T."/>
            <person name="Oyama M."/>
            <person name="Hata H."/>
            <person name="Watanabe M."/>
            <person name="Komatsu T."/>
            <person name="Mizushima-Sugano J."/>
            <person name="Satoh T."/>
            <person name="Shirai Y."/>
            <person name="Takahashi Y."/>
            <person name="Nakagawa K."/>
            <person name="Okumura K."/>
            <person name="Nagase T."/>
            <person name="Nomura N."/>
            <person name="Kikuchi H."/>
            <person name="Masuho Y."/>
            <person name="Yamashita R."/>
            <person name="Nakai K."/>
            <person name="Yada T."/>
            <person name="Nakamura Y."/>
            <person name="Ohara O."/>
            <person name="Isogai T."/>
            <person name="Sugano S."/>
        </authorList>
    </citation>
    <scope>NUCLEOTIDE SEQUENCE [LARGE SCALE MRNA] OF 1-364</scope>
    <source>
        <tissue>Placenta</tissue>
    </source>
</reference>
<reference key="4">
    <citation type="journal article" date="2012" name="Proc. Natl. Acad. Sci. U.S.A.">
        <title>N-terminal acetylome analyses and functional insights of the N-terminal acetyltransferase NatB.</title>
        <authorList>
            <person name="Van Damme P."/>
            <person name="Lasa M."/>
            <person name="Polevoda B."/>
            <person name="Gazquez C."/>
            <person name="Elosegui-Artola A."/>
            <person name="Kim D.S."/>
            <person name="De Juan-Pardo E."/>
            <person name="Demeyer K."/>
            <person name="Hole K."/>
            <person name="Larrea E."/>
            <person name="Timmerman E."/>
            <person name="Prieto J."/>
            <person name="Arnesen T."/>
            <person name="Sherman F."/>
            <person name="Gevaert K."/>
            <person name="Aldabe R."/>
        </authorList>
    </citation>
    <scope>ACETYLATION [LARGE SCALE ANALYSIS] AT MET-1</scope>
    <scope>IDENTIFICATION BY MASS SPECTROMETRY [LARGE SCALE ANALYSIS]</scope>
</reference>
<accession>Q9H8G1</accession>
<accession>Q86V70</accession>
<dbReference type="EMBL" id="AY269787">
    <property type="protein sequence ID" value="AAP30885.1"/>
    <property type="molecule type" value="mRNA"/>
</dbReference>
<dbReference type="EMBL" id="AC012627">
    <property type="status" value="NOT_ANNOTATED_CDS"/>
    <property type="molecule type" value="Genomic_DNA"/>
</dbReference>
<dbReference type="EMBL" id="AK023721">
    <property type="protein sequence ID" value="BAB14656.1"/>
    <property type="status" value="ALT_FRAME"/>
    <property type="molecule type" value="mRNA"/>
</dbReference>
<dbReference type="CCDS" id="CCDS32978.1"/>
<dbReference type="RefSeq" id="NP_079465.3">
    <property type="nucleotide sequence ID" value="NM_025189.3"/>
</dbReference>
<dbReference type="SMR" id="Q9H8G1"/>
<dbReference type="BioGRID" id="123206">
    <property type="interactions" value="30"/>
</dbReference>
<dbReference type="FunCoup" id="Q9H8G1">
    <property type="interactions" value="224"/>
</dbReference>
<dbReference type="IntAct" id="Q9H8G1">
    <property type="interactions" value="24"/>
</dbReference>
<dbReference type="STRING" id="9606.ENSP00000261560"/>
<dbReference type="GlyGen" id="Q9H8G1">
    <property type="glycosylation" value="1 site, 1 O-linked glycan (1 site)"/>
</dbReference>
<dbReference type="iPTMnet" id="Q9H8G1"/>
<dbReference type="PhosphoSitePlus" id="Q9H8G1"/>
<dbReference type="BioMuta" id="ZNF430"/>
<dbReference type="DMDM" id="296453068"/>
<dbReference type="jPOST" id="Q9H8G1"/>
<dbReference type="MassIVE" id="Q9H8G1"/>
<dbReference type="PaxDb" id="9606-ENSP00000261560"/>
<dbReference type="PeptideAtlas" id="Q9H8G1"/>
<dbReference type="ProteomicsDB" id="81205"/>
<dbReference type="Pumba" id="Q9H8G1"/>
<dbReference type="Antibodypedia" id="67977">
    <property type="antibodies" value="2 antibodies from 2 providers"/>
</dbReference>
<dbReference type="DNASU" id="80264"/>
<dbReference type="Ensembl" id="ENST00000261560.10">
    <property type="protein sequence ID" value="ENSP00000261560.4"/>
    <property type="gene ID" value="ENSG00000118620.13"/>
</dbReference>
<dbReference type="GeneID" id="80264"/>
<dbReference type="KEGG" id="hsa:80264"/>
<dbReference type="MANE-Select" id="ENST00000261560.10">
    <property type="protein sequence ID" value="ENSP00000261560.4"/>
    <property type="RefSeq nucleotide sequence ID" value="NM_025189.4"/>
    <property type="RefSeq protein sequence ID" value="NP_079465.3"/>
</dbReference>
<dbReference type="UCSC" id="uc002npj.4">
    <property type="organism name" value="human"/>
</dbReference>
<dbReference type="AGR" id="HGNC:20808"/>
<dbReference type="CTD" id="80264"/>
<dbReference type="GeneCards" id="ZNF430"/>
<dbReference type="HGNC" id="HGNC:20808">
    <property type="gene designation" value="ZNF430"/>
</dbReference>
<dbReference type="HPA" id="ENSG00000118620">
    <property type="expression patterns" value="Low tissue specificity"/>
</dbReference>
<dbReference type="neXtProt" id="NX_Q9H8G1"/>
<dbReference type="OpenTargets" id="ENSG00000118620"/>
<dbReference type="PharmGKB" id="PA134987901"/>
<dbReference type="VEuPathDB" id="HostDB:ENSG00000118620"/>
<dbReference type="eggNOG" id="KOG1721">
    <property type="taxonomic scope" value="Eukaryota"/>
</dbReference>
<dbReference type="GeneTree" id="ENSGT01130000278311"/>
<dbReference type="HOGENOM" id="CLU_002678_44_5_1"/>
<dbReference type="InParanoid" id="Q9H8G1"/>
<dbReference type="OMA" id="CHFCEEF"/>
<dbReference type="OrthoDB" id="9508263at2759"/>
<dbReference type="PAN-GO" id="Q9H8G1">
    <property type="GO annotations" value="3 GO annotations based on evolutionary models"/>
</dbReference>
<dbReference type="PhylomeDB" id="Q9H8G1"/>
<dbReference type="TreeFam" id="TF342117"/>
<dbReference type="PathwayCommons" id="Q9H8G1"/>
<dbReference type="Reactome" id="R-HSA-212436">
    <property type="pathway name" value="Generic Transcription Pathway"/>
</dbReference>
<dbReference type="SignaLink" id="Q9H8G1"/>
<dbReference type="BioGRID-ORCS" id="80264">
    <property type="hits" value="10 hits in 1104 CRISPR screens"/>
</dbReference>
<dbReference type="ChiTaRS" id="ZNF430">
    <property type="organism name" value="human"/>
</dbReference>
<dbReference type="GenomeRNAi" id="80264"/>
<dbReference type="Pharos" id="Q9H8G1">
    <property type="development level" value="Tdark"/>
</dbReference>
<dbReference type="PRO" id="PR:Q9H8G1"/>
<dbReference type="Proteomes" id="UP000005640">
    <property type="component" value="Chromosome 19"/>
</dbReference>
<dbReference type="RNAct" id="Q9H8G1">
    <property type="molecule type" value="protein"/>
</dbReference>
<dbReference type="Bgee" id="ENSG00000118620">
    <property type="expression patterns" value="Expressed in mammalian vulva and 194 other cell types or tissues"/>
</dbReference>
<dbReference type="ExpressionAtlas" id="Q9H8G1">
    <property type="expression patterns" value="baseline and differential"/>
</dbReference>
<dbReference type="GO" id="GO:0005634">
    <property type="term" value="C:nucleus"/>
    <property type="evidence" value="ECO:0007669"/>
    <property type="project" value="UniProtKB-SubCell"/>
</dbReference>
<dbReference type="GO" id="GO:0000981">
    <property type="term" value="F:DNA-binding transcription factor activity, RNA polymerase II-specific"/>
    <property type="evidence" value="ECO:0000318"/>
    <property type="project" value="GO_Central"/>
</dbReference>
<dbReference type="GO" id="GO:0000978">
    <property type="term" value="F:RNA polymerase II cis-regulatory region sequence-specific DNA binding"/>
    <property type="evidence" value="ECO:0000318"/>
    <property type="project" value="GO_Central"/>
</dbReference>
<dbReference type="GO" id="GO:0008270">
    <property type="term" value="F:zinc ion binding"/>
    <property type="evidence" value="ECO:0007669"/>
    <property type="project" value="UniProtKB-KW"/>
</dbReference>
<dbReference type="GO" id="GO:0006355">
    <property type="term" value="P:regulation of DNA-templated transcription"/>
    <property type="evidence" value="ECO:0000318"/>
    <property type="project" value="GO_Central"/>
</dbReference>
<dbReference type="GO" id="GO:0021762">
    <property type="term" value="P:substantia nigra development"/>
    <property type="evidence" value="ECO:0007007"/>
    <property type="project" value="UniProtKB"/>
</dbReference>
<dbReference type="CDD" id="cd07765">
    <property type="entry name" value="KRAB_A-box"/>
    <property type="match status" value="1"/>
</dbReference>
<dbReference type="FunFam" id="3.30.160.60:FF:001737">
    <property type="entry name" value="Zinc finger protein 100"/>
    <property type="match status" value="2"/>
</dbReference>
<dbReference type="FunFam" id="3.30.160.60:FF:000120">
    <property type="entry name" value="Zinc finger protein 430"/>
    <property type="match status" value="8"/>
</dbReference>
<dbReference type="FunFam" id="3.30.160.60:FF:001867">
    <property type="entry name" value="Zinc finger protein 430"/>
    <property type="match status" value="1"/>
</dbReference>
<dbReference type="FunFam" id="3.30.160.60:FF:001934">
    <property type="entry name" value="Zinc finger protein 430"/>
    <property type="match status" value="1"/>
</dbReference>
<dbReference type="FunFam" id="3.30.160.60:FF:002448">
    <property type="entry name" value="Zinc finger protein 430"/>
    <property type="match status" value="1"/>
</dbReference>
<dbReference type="Gene3D" id="6.10.140.140">
    <property type="match status" value="1"/>
</dbReference>
<dbReference type="Gene3D" id="3.30.160.60">
    <property type="entry name" value="Classic Zinc Finger"/>
    <property type="match status" value="13"/>
</dbReference>
<dbReference type="InterPro" id="IPR001909">
    <property type="entry name" value="KRAB"/>
</dbReference>
<dbReference type="InterPro" id="IPR036051">
    <property type="entry name" value="KRAB_dom_sf"/>
</dbReference>
<dbReference type="InterPro" id="IPR036236">
    <property type="entry name" value="Znf_C2H2_sf"/>
</dbReference>
<dbReference type="InterPro" id="IPR013087">
    <property type="entry name" value="Znf_C2H2_type"/>
</dbReference>
<dbReference type="PANTHER" id="PTHR14003">
    <property type="entry name" value="TRANSCRIPTIONAL REPRESSOR PROTEIN YY"/>
    <property type="match status" value="1"/>
</dbReference>
<dbReference type="PANTHER" id="PTHR14003:SF23">
    <property type="entry name" value="ZINC FINGER PROTEIN 143"/>
    <property type="match status" value="1"/>
</dbReference>
<dbReference type="Pfam" id="PF01352">
    <property type="entry name" value="KRAB"/>
    <property type="match status" value="1"/>
</dbReference>
<dbReference type="Pfam" id="PF00096">
    <property type="entry name" value="zf-C2H2"/>
    <property type="match status" value="11"/>
</dbReference>
<dbReference type="SMART" id="SM00349">
    <property type="entry name" value="KRAB"/>
    <property type="match status" value="1"/>
</dbReference>
<dbReference type="SMART" id="SM00355">
    <property type="entry name" value="ZnF_C2H2"/>
    <property type="match status" value="12"/>
</dbReference>
<dbReference type="SUPFAM" id="SSF57667">
    <property type="entry name" value="beta-beta-alpha zinc fingers"/>
    <property type="match status" value="7"/>
</dbReference>
<dbReference type="SUPFAM" id="SSF109640">
    <property type="entry name" value="KRAB domain (Kruppel-associated box)"/>
    <property type="match status" value="1"/>
</dbReference>
<dbReference type="PROSITE" id="PS50805">
    <property type="entry name" value="KRAB"/>
    <property type="match status" value="1"/>
</dbReference>
<dbReference type="PROSITE" id="PS00028">
    <property type="entry name" value="ZINC_FINGER_C2H2_1"/>
    <property type="match status" value="11"/>
</dbReference>
<dbReference type="PROSITE" id="PS50157">
    <property type="entry name" value="ZINC_FINGER_C2H2_2"/>
    <property type="match status" value="12"/>
</dbReference>
<sequence>MENLKSGVYPLKEASGCPGADRNLLVYSFYEKGPLTFRDVAIEFSLEEWQCLDTAQQDLYRKVMLENYRNLVFLAGIAVSKPDLITCLEQGKEPWNMKRHAMVDQPPVTYSHFAQDLWPEQGIKDSFQEVILRRYGKCGHEDLQLRTGCKSVDECNLHKECYDELNQCLTTTQSEIFQYDKYVNVFYKFSNPNIQKIRHTGKKPFKCKKCDKSFCMLLHLTQHKRIHIRENSYQCEECGKVFNWFSTLTRHRRIHTGEKPYKCEQCGKAFKQSSTLTTHKIIHTGEKPYRCEECGKTFNRSSHLTTHKRIHTGEKPYRCEECGRAFNRSSHLTTHKIIHTGEKPYKCEECGKAFNQSSTLTTHKIIHAGEKPYKCEECGKAFYRFSYLTKHKIIHTGEKFYKCEECGKGFNWSSTLTKHKRIHTGEKPYKCEQCGKAFNESSNLTAHKIIHTGEKPYKCEECGKAFNRSPKLTAHKVIHSGEKPYKCEECGKAFNQFSNLTKHKITHIGDTSYKYLECDKAFSQSSTLTKHKVIHTGEKPYNCEEYGKAFNQSSNLIEQSNSYWRETLQM</sequence>
<name>ZN430_HUMAN</name>
<evidence type="ECO:0000255" key="1">
    <source>
        <dbReference type="PROSITE-ProRule" id="PRU00042"/>
    </source>
</evidence>
<evidence type="ECO:0000255" key="2">
    <source>
        <dbReference type="PROSITE-ProRule" id="PRU00119"/>
    </source>
</evidence>
<evidence type="ECO:0000305" key="3"/>
<evidence type="ECO:0007744" key="4">
    <source>
    </source>
</evidence>
<organism>
    <name type="scientific">Homo sapiens</name>
    <name type="common">Human</name>
    <dbReference type="NCBI Taxonomy" id="9606"/>
    <lineage>
        <taxon>Eukaryota</taxon>
        <taxon>Metazoa</taxon>
        <taxon>Chordata</taxon>
        <taxon>Craniata</taxon>
        <taxon>Vertebrata</taxon>
        <taxon>Euteleostomi</taxon>
        <taxon>Mammalia</taxon>
        <taxon>Eutheria</taxon>
        <taxon>Euarchontoglires</taxon>
        <taxon>Primates</taxon>
        <taxon>Haplorrhini</taxon>
        <taxon>Catarrhini</taxon>
        <taxon>Hominidae</taxon>
        <taxon>Homo</taxon>
    </lineage>
</organism>
<keyword id="KW-0007">Acetylation</keyword>
<keyword id="KW-0238">DNA-binding</keyword>
<keyword id="KW-0479">Metal-binding</keyword>
<keyword id="KW-0539">Nucleus</keyword>
<keyword id="KW-1267">Proteomics identification</keyword>
<keyword id="KW-1185">Reference proteome</keyword>
<keyword id="KW-0677">Repeat</keyword>
<keyword id="KW-0804">Transcription</keyword>
<keyword id="KW-0805">Transcription regulation</keyword>
<keyword id="KW-0862">Zinc</keyword>
<keyword id="KW-0863">Zinc-finger</keyword>
<proteinExistence type="evidence at protein level"/>
<feature type="chain" id="PRO_0000047578" description="Zinc finger protein 430">
    <location>
        <begin position="1"/>
        <end position="570"/>
    </location>
</feature>
<feature type="domain" description="KRAB" evidence="2">
    <location>
        <begin position="35"/>
        <end position="107"/>
    </location>
</feature>
<feature type="zinc finger region" description="C2H2-type 1" evidence="1">
    <location>
        <begin position="205"/>
        <end position="227"/>
    </location>
</feature>
<feature type="zinc finger region" description="C2H2-type 2" evidence="1">
    <location>
        <begin position="233"/>
        <end position="255"/>
    </location>
</feature>
<feature type="zinc finger region" description="C2H2-type 3" evidence="1">
    <location>
        <begin position="261"/>
        <end position="283"/>
    </location>
</feature>
<feature type="zinc finger region" description="C2H2-type 4" evidence="1">
    <location>
        <begin position="289"/>
        <end position="311"/>
    </location>
</feature>
<feature type="zinc finger region" description="C2H2-type 5" evidence="1">
    <location>
        <begin position="317"/>
        <end position="339"/>
    </location>
</feature>
<feature type="zinc finger region" description="C2H2-type 6" evidence="1">
    <location>
        <begin position="345"/>
        <end position="367"/>
    </location>
</feature>
<feature type="zinc finger region" description="C2H2-type 7" evidence="1">
    <location>
        <begin position="373"/>
        <end position="395"/>
    </location>
</feature>
<feature type="zinc finger region" description="C2H2-type 8" evidence="1">
    <location>
        <begin position="401"/>
        <end position="423"/>
    </location>
</feature>
<feature type="zinc finger region" description="C2H2-type 9" evidence="1">
    <location>
        <begin position="429"/>
        <end position="451"/>
    </location>
</feature>
<feature type="zinc finger region" description="C2H2-type 10" evidence="1">
    <location>
        <begin position="457"/>
        <end position="479"/>
    </location>
</feature>
<feature type="zinc finger region" description="C2H2-type 11" evidence="1">
    <location>
        <begin position="485"/>
        <end position="507"/>
    </location>
</feature>
<feature type="zinc finger region" description="C2H2-type 12; degenerate" evidence="1">
    <location>
        <begin position="513"/>
        <end position="535"/>
    </location>
</feature>
<feature type="modified residue" description="N-acetylmethionine" evidence="4">
    <location>
        <position position="1"/>
    </location>
</feature>
<feature type="sequence conflict" description="In Ref. 1; AAP30885 and 3; BAB14656." evidence="3" ref="1 3">
    <original>K</original>
    <variation>R</variation>
    <location>
        <position position="150"/>
    </location>
</feature>
<gene>
    <name type="primary">ZNF430</name>
</gene>
<comment type="function">
    <text>May be involved in transcriptional regulation.</text>
</comment>
<comment type="subcellular location">
    <subcellularLocation>
        <location evidence="3">Nucleus</location>
    </subcellularLocation>
</comment>
<comment type="similarity">
    <text evidence="3">Belongs to the krueppel C2H2-type zinc-finger protein family.</text>
</comment>
<comment type="sequence caution" evidence="3">
    <conflict type="frameshift">
        <sequence resource="EMBL-CDS" id="BAB14656"/>
    </conflict>
</comment>
<protein>
    <recommendedName>
        <fullName>Zinc finger protein 430</fullName>
    </recommendedName>
</protein>